<protein>
    <recommendedName>
        <fullName>RNA-binding protein SRO9</fullName>
    </recommendedName>
    <alternativeName>
        <fullName>Suppressor of RHO3 protein 9</fullName>
    </alternativeName>
</protein>
<reference key="1">
    <citation type="journal article" date="1992" name="Nature">
        <title>The complete DNA sequence of yeast chromosome III.</title>
        <authorList>
            <person name="Oliver S.G."/>
            <person name="van der Aart Q.J.M."/>
            <person name="Agostoni-Carbone M.L."/>
            <person name="Aigle M."/>
            <person name="Alberghina L."/>
            <person name="Alexandraki D."/>
            <person name="Antoine G."/>
            <person name="Anwar R."/>
            <person name="Ballesta J.P.G."/>
            <person name="Benit P."/>
            <person name="Berben G."/>
            <person name="Bergantino E."/>
            <person name="Biteau N."/>
            <person name="Bolle P.-A."/>
            <person name="Bolotin-Fukuhara M."/>
            <person name="Brown A."/>
            <person name="Brown A.J.P."/>
            <person name="Buhler J.-M."/>
            <person name="Carcano C."/>
            <person name="Carignani G."/>
            <person name="Cederberg H."/>
            <person name="Chanet R."/>
            <person name="Contreras R."/>
            <person name="Crouzet M."/>
            <person name="Daignan-Fornier B."/>
            <person name="Defoor E."/>
            <person name="Delgado M.D."/>
            <person name="Demolder J."/>
            <person name="Doira C."/>
            <person name="Dubois E."/>
            <person name="Dujon B."/>
            <person name="Duesterhoeft A."/>
            <person name="Erdmann D."/>
            <person name="Esteban M."/>
            <person name="Fabre F."/>
            <person name="Fairhead C."/>
            <person name="Faye G."/>
            <person name="Feldmann H."/>
            <person name="Fiers W."/>
            <person name="Francingues-Gaillard M.-C."/>
            <person name="Franco L."/>
            <person name="Frontali L."/>
            <person name="Fukuhara H."/>
            <person name="Fuller L.J."/>
            <person name="Galland P."/>
            <person name="Gent M.E."/>
            <person name="Gigot D."/>
            <person name="Gilliquet V."/>
            <person name="Glansdorff N."/>
            <person name="Goffeau A."/>
            <person name="Grenson M."/>
            <person name="Grisanti P."/>
            <person name="Grivell L.A."/>
            <person name="de Haan M."/>
            <person name="Haasemann M."/>
            <person name="Hatat D."/>
            <person name="Hoenicka J."/>
            <person name="Hegemann J.H."/>
            <person name="Herbert C.J."/>
            <person name="Hilger F."/>
            <person name="Hohmann S."/>
            <person name="Hollenberg C.P."/>
            <person name="Huse K."/>
            <person name="Iborra F."/>
            <person name="Indge K.J."/>
            <person name="Isono K."/>
            <person name="Jacq C."/>
            <person name="Jacquet M."/>
            <person name="James C.M."/>
            <person name="Jauniaux J.-C."/>
            <person name="Jia Y."/>
            <person name="Jimenez A."/>
            <person name="Kelly A."/>
            <person name="Kleinhans U."/>
            <person name="Kreisl P."/>
            <person name="Lanfranchi G."/>
            <person name="Lewis C."/>
            <person name="van der Linden C.G."/>
            <person name="Lucchini G."/>
            <person name="Lutzenkirchen K."/>
            <person name="Maat M.J."/>
            <person name="Mallet L."/>
            <person name="Mannhaupt G."/>
            <person name="Martegani E."/>
            <person name="Mathieu A."/>
            <person name="Maurer C.T.C."/>
            <person name="McConnell D."/>
            <person name="McKee R.A."/>
            <person name="Messenguy F."/>
            <person name="Mewes H.-W."/>
            <person name="Molemans F."/>
            <person name="Montague M.A."/>
            <person name="Muzi Falconi M."/>
            <person name="Navas L."/>
            <person name="Newlon C.S."/>
            <person name="Noone D."/>
            <person name="Pallier C."/>
            <person name="Panzeri L."/>
            <person name="Pearson B.M."/>
            <person name="Perea J."/>
            <person name="Philippsen P."/>
            <person name="Pierard A."/>
            <person name="Planta R.J."/>
            <person name="Plevani P."/>
            <person name="Poetsch B."/>
            <person name="Pohl F.M."/>
            <person name="Purnelle B."/>
            <person name="Ramezani Rad M."/>
            <person name="Rasmussen S.W."/>
            <person name="Raynal A."/>
            <person name="Remacha M.A."/>
            <person name="Richterich P."/>
            <person name="Roberts A.B."/>
            <person name="Rodriguez F."/>
            <person name="Sanz E."/>
            <person name="Schaaff-Gerstenschlaeger I."/>
            <person name="Scherens B."/>
            <person name="Schweitzer B."/>
            <person name="Shu Y."/>
            <person name="Skala J."/>
            <person name="Slonimski P.P."/>
            <person name="Sor F."/>
            <person name="Soustelle C."/>
            <person name="Spiegelberg R."/>
            <person name="Stateva L.I."/>
            <person name="Steensma H.Y."/>
            <person name="Steiner S."/>
            <person name="Thierry A."/>
            <person name="Thireos G."/>
            <person name="Tzermia M."/>
            <person name="Urrestarazu L.A."/>
            <person name="Valle G."/>
            <person name="Vetter I."/>
            <person name="van Vliet-Reedijk J.C."/>
            <person name="Voet M."/>
            <person name="Volckaert G."/>
            <person name="Vreken P."/>
            <person name="Wang H."/>
            <person name="Warmington J.R."/>
            <person name="von Wettstein D."/>
            <person name="Wicksteed B.L."/>
            <person name="Wilson C."/>
            <person name="Wurst H."/>
            <person name="Xu G."/>
            <person name="Yoshikawa A."/>
            <person name="Zimmermann F.K."/>
            <person name="Sgouros J.G."/>
        </authorList>
    </citation>
    <scope>NUCLEOTIDE SEQUENCE [LARGE SCALE GENOMIC DNA]</scope>
    <source>
        <strain>ATCC 204508 / S288c</strain>
    </source>
</reference>
<reference key="2">
    <citation type="journal article" date="2014" name="G3 (Bethesda)">
        <title>The reference genome sequence of Saccharomyces cerevisiae: Then and now.</title>
        <authorList>
            <person name="Engel S.R."/>
            <person name="Dietrich F.S."/>
            <person name="Fisk D.G."/>
            <person name="Binkley G."/>
            <person name="Balakrishnan R."/>
            <person name="Costanzo M.C."/>
            <person name="Dwight S.S."/>
            <person name="Hitz B.C."/>
            <person name="Karra K."/>
            <person name="Nash R.S."/>
            <person name="Weng S."/>
            <person name="Wong E.D."/>
            <person name="Lloyd P."/>
            <person name="Skrzypek M.S."/>
            <person name="Miyasato S.R."/>
            <person name="Simison M."/>
            <person name="Cherry J.M."/>
        </authorList>
    </citation>
    <scope>GENOME REANNOTATION</scope>
    <source>
        <strain>ATCC 204508 / S288c</strain>
    </source>
</reference>
<reference key="3">
    <citation type="journal article" date="2001" name="Mol. Cell. Biol.">
        <title>The Hsp70-Ydj1 molecular chaperone represses the activity of the heme activator protein Hap1 in the absence of heme.</title>
        <authorList>
            <person name="Hon T."/>
            <person name="Lee H.C."/>
            <person name="Hach A."/>
            <person name="Johnson J.L."/>
            <person name="Craig E.A."/>
            <person name="Erdjument-Bromage H."/>
            <person name="Tempst P."/>
            <person name="Zhang L."/>
        </authorList>
    </citation>
    <scope>PROTEIN SEQUENCE OF 24-44; 43-65; 137-157; 192-219; 227-248 AND 342-364</scope>
    <scope>FUNCTION</scope>
    <scope>IDENTIFICATION IN HMC COMPLEX</scope>
    <scope>IDENTIFICATION BY MASS SPECTROMETRY</scope>
</reference>
<reference key="4">
    <citation type="journal article" date="1997" name="Genetics">
        <title>SRO9, a multicopy suppressor of the bud growth defect in the Saccharomyces cerevisiae RHO3-deficient cells, shows strong genetic interactions with tropomyosin genes, suggesting its role in organization of the actin cytoskeleton.</title>
        <authorList>
            <person name="Kagami M."/>
            <person name="Toh-e A."/>
            <person name="Matsui Y."/>
        </authorList>
    </citation>
    <scope>SUBCELLULAR LOCATION</scope>
</reference>
<reference key="5">
    <citation type="journal article" date="1999" name="Mol. Biol. Cell">
        <title>Two yeast La motif-containing proteins are RNA-binding proteins that associate with polyribosomes.</title>
        <authorList>
            <person name="Sobel S.G."/>
            <person name="Wolin S.L."/>
        </authorList>
    </citation>
    <scope>FUNCTION</scope>
    <scope>SUBCELLULAR LOCATION</scope>
</reference>
<reference key="6">
    <citation type="journal article" date="2003" name="Nature">
        <title>Sequencing and comparison of yeast species to identify genes and regulatory elements.</title>
        <authorList>
            <person name="Kellis M."/>
            <person name="Patterson N."/>
            <person name="Endrizzi M."/>
            <person name="Birren B.W."/>
            <person name="Lander E.S."/>
        </authorList>
    </citation>
    <scope>IDENTIFICATION OF PROBABLE INITIATION SITE</scope>
</reference>
<reference key="7">
    <citation type="journal article" date="2003" name="Nature">
        <title>Global analysis of protein localization in budding yeast.</title>
        <authorList>
            <person name="Huh W.-K."/>
            <person name="Falvo J.V."/>
            <person name="Gerke L.C."/>
            <person name="Carroll A.S."/>
            <person name="Howson R.W."/>
            <person name="Weissman J.S."/>
            <person name="O'Shea E.K."/>
        </authorList>
    </citation>
    <scope>SUBCELLULAR LOCATION [LARGE SCALE ANALYSIS]</scope>
</reference>
<reference key="8">
    <citation type="journal article" date="2003" name="Nature">
        <title>Global analysis of protein expression in yeast.</title>
        <authorList>
            <person name="Ghaemmaghami S."/>
            <person name="Huh W.-K."/>
            <person name="Bower K."/>
            <person name="Howson R.W."/>
            <person name="Belle A."/>
            <person name="Dephoure N."/>
            <person name="O'Shea E.K."/>
            <person name="Weissman J.S."/>
        </authorList>
    </citation>
    <scope>LEVEL OF PROTEIN EXPRESSION [LARGE SCALE ANALYSIS]</scope>
</reference>
<reference key="9">
    <citation type="journal article" date="2008" name="Mol. Cell. Proteomics">
        <title>A multidimensional chromatography technology for in-depth phosphoproteome analysis.</title>
        <authorList>
            <person name="Albuquerque C.P."/>
            <person name="Smolka M.B."/>
            <person name="Payne S.H."/>
            <person name="Bafna V."/>
            <person name="Eng J."/>
            <person name="Zhou H."/>
        </authorList>
    </citation>
    <scope>PHOSPHORYLATION [LARGE SCALE ANALYSIS] AT SER-55 AND SER-422</scope>
    <scope>IDENTIFICATION BY MASS SPECTROMETRY [LARGE SCALE ANALYSIS]</scope>
</reference>
<reference key="10">
    <citation type="journal article" date="2009" name="Science">
        <title>Global analysis of Cdk1 substrate phosphorylation sites provides insights into evolution.</title>
        <authorList>
            <person name="Holt L.J."/>
            <person name="Tuch B.B."/>
            <person name="Villen J."/>
            <person name="Johnson A.D."/>
            <person name="Gygi S.P."/>
            <person name="Morgan D.O."/>
        </authorList>
    </citation>
    <scope>PHOSPHORYLATION [LARGE SCALE ANALYSIS] AT SER-148</scope>
    <scope>IDENTIFICATION BY MASS SPECTROMETRY [LARGE SCALE ANALYSIS]</scope>
</reference>
<reference key="11">
    <citation type="journal article" date="2012" name="Proc. Natl. Acad. Sci. U.S.A.">
        <title>N-terminal acetylome analyses and functional insights of the N-terminal acetyltransferase NatB.</title>
        <authorList>
            <person name="Van Damme P."/>
            <person name="Lasa M."/>
            <person name="Polevoda B."/>
            <person name="Gazquez C."/>
            <person name="Elosegui-Artola A."/>
            <person name="Kim D.S."/>
            <person name="De Juan-Pardo E."/>
            <person name="Demeyer K."/>
            <person name="Hole K."/>
            <person name="Larrea E."/>
            <person name="Timmerman E."/>
            <person name="Prieto J."/>
            <person name="Arnesen T."/>
            <person name="Sherman F."/>
            <person name="Gevaert K."/>
            <person name="Aldabe R."/>
        </authorList>
    </citation>
    <scope>IDENTIFICATION BY MASS SPECTROMETRY [LARGE SCALE ANALYSIS]</scope>
</reference>
<reference key="12">
    <citation type="journal article" date="2012" name="Proteomics">
        <title>Sites of ubiquitin attachment in Saccharomyces cerevisiae.</title>
        <authorList>
            <person name="Starita L.M."/>
            <person name="Lo R.S."/>
            <person name="Eng J.K."/>
            <person name="von Haller P.D."/>
            <person name="Fields S."/>
        </authorList>
    </citation>
    <scope>UBIQUITINATION [LARGE SCALE ANALYSIS] AT LYS-156; LYS-301; LYS-342 AND LYS-352</scope>
    <scope>IDENTIFICATION BY MASS SPECTROMETRY [LARGE SCALE ANALYSIS]</scope>
</reference>
<proteinExistence type="evidence at protein level"/>
<gene>
    <name type="primary">SRO9</name>
    <name type="ordered locus">YCL037C</name>
    <name type="ORF">YCL37C</name>
</gene>
<keyword id="KW-0963">Cytoplasm</keyword>
<keyword id="KW-0903">Direct protein sequencing</keyword>
<keyword id="KW-1017">Isopeptide bond</keyword>
<keyword id="KW-0597">Phosphoprotein</keyword>
<keyword id="KW-1185">Reference proteome</keyword>
<keyword id="KW-0694">RNA-binding</keyword>
<keyword id="KW-0832">Ubl conjugation</keyword>
<dbReference type="EMBL" id="X59720">
    <property type="protein sequence ID" value="CAA42379.1"/>
    <property type="status" value="ALT_INIT"/>
    <property type="molecule type" value="Genomic_DNA"/>
</dbReference>
<dbReference type="EMBL" id="BK006937">
    <property type="protein sequence ID" value="DAA07447.1"/>
    <property type="molecule type" value="Genomic_DNA"/>
</dbReference>
<dbReference type="PIR" id="S19365">
    <property type="entry name" value="S19365"/>
</dbReference>
<dbReference type="RefSeq" id="NP_009893.2">
    <property type="nucleotide sequence ID" value="NM_001178682.1"/>
</dbReference>
<dbReference type="SMR" id="P25567"/>
<dbReference type="BioGRID" id="30946">
    <property type="interactions" value="999"/>
</dbReference>
<dbReference type="ComplexPortal" id="CPX-1276">
    <property type="entry name" value="HMC complex"/>
</dbReference>
<dbReference type="ComplexPortal" id="CPX-1882">
    <property type="entry name" value="HAP1 transcriptional repressor complex, SSA1 variant"/>
</dbReference>
<dbReference type="ComplexPortal" id="CPX-1883">
    <property type="entry name" value="HAP1 transcriptional repressor complex, SSA2 variant"/>
</dbReference>
<dbReference type="DIP" id="DIP-6638N"/>
<dbReference type="FunCoup" id="P25567">
    <property type="interactions" value="823"/>
</dbReference>
<dbReference type="IntAct" id="P25567">
    <property type="interactions" value="73"/>
</dbReference>
<dbReference type="MINT" id="P25567"/>
<dbReference type="STRING" id="4932.YCL037C"/>
<dbReference type="GlyGen" id="P25567">
    <property type="glycosylation" value="2 sites, 1 O-linked glycan (2 sites)"/>
</dbReference>
<dbReference type="iPTMnet" id="P25567"/>
<dbReference type="PaxDb" id="4932-YCL037C"/>
<dbReference type="PeptideAtlas" id="P25567"/>
<dbReference type="EnsemblFungi" id="YCL037C_mRNA">
    <property type="protein sequence ID" value="YCL037C"/>
    <property type="gene ID" value="YCL037C"/>
</dbReference>
<dbReference type="GeneID" id="850320"/>
<dbReference type="KEGG" id="sce:YCL037C"/>
<dbReference type="AGR" id="SGD:S000000542"/>
<dbReference type="SGD" id="S000000542">
    <property type="gene designation" value="SRO9"/>
</dbReference>
<dbReference type="VEuPathDB" id="FungiDB:YCL037C"/>
<dbReference type="eggNOG" id="KOG2590">
    <property type="taxonomic scope" value="Eukaryota"/>
</dbReference>
<dbReference type="GeneTree" id="ENSGT00940000176708"/>
<dbReference type="HOGENOM" id="CLU_039873_0_0_1"/>
<dbReference type="InParanoid" id="P25567"/>
<dbReference type="OMA" id="FYRIVNM"/>
<dbReference type="OrthoDB" id="340227at2759"/>
<dbReference type="BioCyc" id="YEAST:G3O-29296-MONOMER"/>
<dbReference type="BioGRID-ORCS" id="850320">
    <property type="hits" value="7 hits in 10 CRISPR screens"/>
</dbReference>
<dbReference type="PRO" id="PR:P25567"/>
<dbReference type="Proteomes" id="UP000002311">
    <property type="component" value="Chromosome III"/>
</dbReference>
<dbReference type="RNAct" id="P25567">
    <property type="molecule type" value="protein"/>
</dbReference>
<dbReference type="GO" id="GO:0010494">
    <property type="term" value="C:cytoplasmic stress granule"/>
    <property type="evidence" value="ECO:0000314"/>
    <property type="project" value="SGD"/>
</dbReference>
<dbReference type="GO" id="GO:0005829">
    <property type="term" value="C:cytosol"/>
    <property type="evidence" value="ECO:0000318"/>
    <property type="project" value="GO_Central"/>
</dbReference>
<dbReference type="GO" id="GO:0005634">
    <property type="term" value="C:nucleus"/>
    <property type="evidence" value="ECO:0000303"/>
    <property type="project" value="ComplexPortal"/>
</dbReference>
<dbReference type="GO" id="GO:0017053">
    <property type="term" value="C:transcription repressor complex"/>
    <property type="evidence" value="ECO:0000303"/>
    <property type="project" value="ComplexPortal"/>
</dbReference>
<dbReference type="GO" id="GO:0003729">
    <property type="term" value="F:mRNA binding"/>
    <property type="evidence" value="ECO:0007005"/>
    <property type="project" value="SGD"/>
</dbReference>
<dbReference type="GO" id="GO:0003723">
    <property type="term" value="F:RNA binding"/>
    <property type="evidence" value="ECO:0000314"/>
    <property type="project" value="SGD"/>
</dbReference>
<dbReference type="GO" id="GO:0045892">
    <property type="term" value="P:negative regulation of DNA-templated transcription"/>
    <property type="evidence" value="ECO:0000303"/>
    <property type="project" value="ComplexPortal"/>
</dbReference>
<dbReference type="GO" id="GO:0045727">
    <property type="term" value="P:positive regulation of translation"/>
    <property type="evidence" value="ECO:0000318"/>
    <property type="project" value="GO_Central"/>
</dbReference>
<dbReference type="GO" id="GO:0006417">
    <property type="term" value="P:regulation of translation"/>
    <property type="evidence" value="ECO:0000315"/>
    <property type="project" value="SGD"/>
</dbReference>
<dbReference type="GO" id="GO:0070482">
    <property type="term" value="P:response to oxygen levels"/>
    <property type="evidence" value="ECO:0000303"/>
    <property type="project" value="ComplexPortal"/>
</dbReference>
<dbReference type="CDD" id="cd07323">
    <property type="entry name" value="LAM"/>
    <property type="match status" value="1"/>
</dbReference>
<dbReference type="FunFam" id="1.10.10.10:FF:000623">
    <property type="entry name" value="Slf1p"/>
    <property type="match status" value="1"/>
</dbReference>
<dbReference type="Gene3D" id="1.10.10.10">
    <property type="entry name" value="Winged helix-like DNA-binding domain superfamily/Winged helix DNA-binding domain"/>
    <property type="match status" value="1"/>
</dbReference>
<dbReference type="InterPro" id="IPR045180">
    <property type="entry name" value="La_dom_prot"/>
</dbReference>
<dbReference type="InterPro" id="IPR006630">
    <property type="entry name" value="La_HTH"/>
</dbReference>
<dbReference type="InterPro" id="IPR036388">
    <property type="entry name" value="WH-like_DNA-bd_sf"/>
</dbReference>
<dbReference type="InterPro" id="IPR036390">
    <property type="entry name" value="WH_DNA-bd_sf"/>
</dbReference>
<dbReference type="PANTHER" id="PTHR22792:SF132">
    <property type="entry name" value="LA-RELATED PROTEIN 1"/>
    <property type="match status" value="1"/>
</dbReference>
<dbReference type="PANTHER" id="PTHR22792">
    <property type="entry name" value="LUPUS LA PROTEIN-RELATED"/>
    <property type="match status" value="1"/>
</dbReference>
<dbReference type="Pfam" id="PF05383">
    <property type="entry name" value="La"/>
    <property type="match status" value="1"/>
</dbReference>
<dbReference type="SMART" id="SM00715">
    <property type="entry name" value="LA"/>
    <property type="match status" value="1"/>
</dbReference>
<dbReference type="SUPFAM" id="SSF46785">
    <property type="entry name" value="Winged helix' DNA-binding domain"/>
    <property type="match status" value="1"/>
</dbReference>
<dbReference type="PROSITE" id="PS50961">
    <property type="entry name" value="HTH_LA"/>
    <property type="match status" value="1"/>
</dbReference>
<organism>
    <name type="scientific">Saccharomyces cerevisiae (strain ATCC 204508 / S288c)</name>
    <name type="common">Baker's yeast</name>
    <dbReference type="NCBI Taxonomy" id="559292"/>
    <lineage>
        <taxon>Eukaryota</taxon>
        <taxon>Fungi</taxon>
        <taxon>Dikarya</taxon>
        <taxon>Ascomycota</taxon>
        <taxon>Saccharomycotina</taxon>
        <taxon>Saccharomycetes</taxon>
        <taxon>Saccharomycetales</taxon>
        <taxon>Saccharomycetaceae</taxon>
        <taxon>Saccharomyces</taxon>
    </lineage>
</organism>
<accession>P25567</accession>
<accession>D6VQX8</accession>
<feature type="chain" id="PRO_0000207615" description="RNA-binding protein SRO9">
    <location>
        <begin position="1"/>
        <end position="434"/>
    </location>
</feature>
<feature type="domain" description="HTH La-type RNA-binding" evidence="1">
    <location>
        <begin position="255"/>
        <end position="351"/>
    </location>
</feature>
<feature type="region of interest" description="Disordered" evidence="2">
    <location>
        <begin position="1"/>
        <end position="243"/>
    </location>
</feature>
<feature type="region of interest" description="Disordered" evidence="2">
    <location>
        <begin position="396"/>
        <end position="434"/>
    </location>
</feature>
<feature type="compositionally biased region" description="Low complexity" evidence="2">
    <location>
        <begin position="1"/>
        <end position="13"/>
    </location>
</feature>
<feature type="compositionally biased region" description="Polar residues" evidence="2">
    <location>
        <begin position="26"/>
        <end position="41"/>
    </location>
</feature>
<feature type="compositionally biased region" description="Low complexity" evidence="2">
    <location>
        <begin position="93"/>
        <end position="124"/>
    </location>
</feature>
<feature type="compositionally biased region" description="Basic residues" evidence="2">
    <location>
        <begin position="125"/>
        <end position="140"/>
    </location>
</feature>
<feature type="compositionally biased region" description="Polar residues" evidence="2">
    <location>
        <begin position="158"/>
        <end position="167"/>
    </location>
</feature>
<feature type="compositionally biased region" description="Basic residues" evidence="2">
    <location>
        <begin position="173"/>
        <end position="195"/>
    </location>
</feature>
<feature type="compositionally biased region" description="Polar residues" evidence="2">
    <location>
        <begin position="196"/>
        <end position="208"/>
    </location>
</feature>
<feature type="compositionally biased region" description="Low complexity" evidence="2">
    <location>
        <begin position="218"/>
        <end position="227"/>
    </location>
</feature>
<feature type="compositionally biased region" description="Basic residues" evidence="2">
    <location>
        <begin position="228"/>
        <end position="238"/>
    </location>
</feature>
<feature type="modified residue" description="Phosphoserine" evidence="9">
    <location>
        <position position="55"/>
    </location>
</feature>
<feature type="modified residue" description="Phosphoserine" evidence="10">
    <location>
        <position position="148"/>
    </location>
</feature>
<feature type="modified residue" description="Phosphoserine" evidence="9">
    <location>
        <position position="422"/>
    </location>
</feature>
<feature type="cross-link" description="Glycyl lysine isopeptide (Lys-Gly) (interchain with G-Cter in ubiquitin)" evidence="11">
    <location>
        <position position="156"/>
    </location>
</feature>
<feature type="cross-link" description="Glycyl lysine isopeptide (Lys-Gly) (interchain with G-Cter in ubiquitin)" evidence="11">
    <location>
        <position position="301"/>
    </location>
</feature>
<feature type="cross-link" description="Glycyl lysine isopeptide (Lys-Gly) (interchain with G-Cter in ubiquitin)" evidence="11">
    <location>
        <position position="342"/>
    </location>
</feature>
<feature type="cross-link" description="Glycyl lysine isopeptide (Lys-Gly) (interchain with G-Cter in ubiquitin)" evidence="11">
    <location>
        <position position="352"/>
    </location>
</feature>
<evidence type="ECO:0000255" key="1">
    <source>
        <dbReference type="PROSITE-ProRule" id="PRU00332"/>
    </source>
</evidence>
<evidence type="ECO:0000256" key="2">
    <source>
        <dbReference type="SAM" id="MobiDB-lite"/>
    </source>
</evidence>
<evidence type="ECO:0000269" key="3">
    <source>
    </source>
</evidence>
<evidence type="ECO:0000269" key="4">
    <source>
    </source>
</evidence>
<evidence type="ECO:0000269" key="5">
    <source>
    </source>
</evidence>
<evidence type="ECO:0000269" key="6">
    <source>
    </source>
</evidence>
<evidence type="ECO:0000269" key="7">
    <source>
    </source>
</evidence>
<evidence type="ECO:0000305" key="8"/>
<evidence type="ECO:0007744" key="9">
    <source>
    </source>
</evidence>
<evidence type="ECO:0007744" key="10">
    <source>
    </source>
</evidence>
<evidence type="ECO:0007744" key="11">
    <source>
    </source>
</evidence>
<sequence length="434" mass="48060">MSAETAAANTATAPVPEVQEQESSKSKQVNLTPAPLPTSSPWKLAPTEIPVSTISIEDLDATRKKKNRTPTPKSSTATKWVPIKASITVSGTKRSGSKNGASNGNSNKSKNNKTAASSTSSSNANRKKKHHQHNAKKQQQMKKDGFESAVGEEDSKDATSQENGQSTQQQQPPHHRNHHHSHHHNSNGPQRRKFHNSNNAGMPQNQGFPPQFKPYQGRNARNNNNNRSKYHNHFHHNQQHPQQPMVKLQQQFYPVQPVLMAINNIARQIEYYFSEENLTVDNYLRSKLSKDGFAPLSLISKFYRVVNMSFGGDTNLILAALREIVANEAATVNVAEGTLAAKEGDNVTGEAKEPSPLDKYFVRSKSWSNWLPETFETEINIEKELVGDALDQFMISLPPVPQQEEESSTELASQEQETKEDSAPVAAGESESSL</sequence>
<comment type="function">
    <text evidence="3 4">May overlap in function with tropomyosin and may be involved in organization of actin filaments. Acts as a multicopy suppressor of RHO3 mutation. RNA-binding protein which may modulate mRNA translation. Involved in heme regulation of HAP1, as a component of the high-molecular-weight complex (HMC).</text>
</comment>
<comment type="subunit">
    <text evidence="4">Interacts with HAP1. Component of the HMC including HAP1, SRO9 and YDJ1.</text>
</comment>
<comment type="subcellular location">
    <subcellularLocation>
        <location evidence="3 5 7">Cytoplasm</location>
    </subcellularLocation>
    <text>Associates with translating ribosome.</text>
</comment>
<comment type="miscellaneous">
    <text evidence="6">Present with 8430 molecules/cell in log phase SD medium.</text>
</comment>
<comment type="sequence caution" evidence="8">
    <conflict type="erroneous initiation">
        <sequence resource="EMBL-CDS" id="CAA42379"/>
    </conflict>
</comment>
<name>SRO9_YEAST</name>